<accession>B1MDQ0</accession>
<name>LEUD_MYCA9</name>
<sequence>MEAFDTHTGIGVPLRRSNVDTDQIIPAVYLKRVTRTGFEDGLFAGWRTDPSFILNLEPFNRGTVLVAGPEFGTGSSREHAVWALMDYGFRVVLSSRFGDIFRGNAGKAGLVAGLVGQSDIELLWKLIEQNPGLELTVNLEDRTVTAGTAVVPFEIDDYTRWRLLEGLDDIGLTLRKVDEIAAFEAARPEFKPRTLEPSE</sequence>
<evidence type="ECO:0000255" key="1">
    <source>
        <dbReference type="HAMAP-Rule" id="MF_01031"/>
    </source>
</evidence>
<keyword id="KW-0028">Amino-acid biosynthesis</keyword>
<keyword id="KW-0100">Branched-chain amino acid biosynthesis</keyword>
<keyword id="KW-0432">Leucine biosynthesis</keyword>
<keyword id="KW-0456">Lyase</keyword>
<keyword id="KW-1185">Reference proteome</keyword>
<reference key="1">
    <citation type="journal article" date="2009" name="PLoS ONE">
        <title>Non mycobacterial virulence genes in the genome of the emerging pathogen Mycobacterium abscessus.</title>
        <authorList>
            <person name="Ripoll F."/>
            <person name="Pasek S."/>
            <person name="Schenowitz C."/>
            <person name="Dossat C."/>
            <person name="Barbe V."/>
            <person name="Rottman M."/>
            <person name="Macheras E."/>
            <person name="Heym B."/>
            <person name="Herrmann J.L."/>
            <person name="Daffe M."/>
            <person name="Brosch R."/>
            <person name="Risler J.L."/>
            <person name="Gaillard J.L."/>
        </authorList>
    </citation>
    <scope>NUCLEOTIDE SEQUENCE [LARGE SCALE GENOMIC DNA]</scope>
    <source>
        <strain>ATCC 19977 / DSM 44196 / CCUG 20993 / CIP 104536 / JCM 13569 / NCTC 13031 / TMC 1543 / L948</strain>
    </source>
</reference>
<organism>
    <name type="scientific">Mycobacteroides abscessus (strain ATCC 19977 / DSM 44196 / CCUG 20993 / CIP 104536 / JCM 13569 / NCTC 13031 / TMC 1543 / L948)</name>
    <name type="common">Mycobacterium abscessus</name>
    <dbReference type="NCBI Taxonomy" id="561007"/>
    <lineage>
        <taxon>Bacteria</taxon>
        <taxon>Bacillati</taxon>
        <taxon>Actinomycetota</taxon>
        <taxon>Actinomycetes</taxon>
        <taxon>Mycobacteriales</taxon>
        <taxon>Mycobacteriaceae</taxon>
        <taxon>Mycobacteroides</taxon>
        <taxon>Mycobacteroides abscessus</taxon>
    </lineage>
</organism>
<protein>
    <recommendedName>
        <fullName evidence="1">3-isopropylmalate dehydratase small subunit</fullName>
        <ecNumber evidence="1">4.2.1.33</ecNumber>
    </recommendedName>
    <alternativeName>
        <fullName evidence="1">Alpha-IPM isomerase</fullName>
        <shortName evidence="1">IPMI</shortName>
    </alternativeName>
    <alternativeName>
        <fullName evidence="1">Isopropylmalate isomerase</fullName>
    </alternativeName>
</protein>
<feature type="chain" id="PRO_1000135819" description="3-isopropylmalate dehydratase small subunit">
    <location>
        <begin position="1"/>
        <end position="199"/>
    </location>
</feature>
<proteinExistence type="inferred from homology"/>
<comment type="function">
    <text evidence="1">Catalyzes the isomerization between 2-isopropylmalate and 3-isopropylmalate, via the formation of 2-isopropylmaleate.</text>
</comment>
<comment type="catalytic activity">
    <reaction evidence="1">
        <text>(2R,3S)-3-isopropylmalate = (2S)-2-isopropylmalate</text>
        <dbReference type="Rhea" id="RHEA:32287"/>
        <dbReference type="ChEBI" id="CHEBI:1178"/>
        <dbReference type="ChEBI" id="CHEBI:35121"/>
        <dbReference type="EC" id="4.2.1.33"/>
    </reaction>
</comment>
<comment type="pathway">
    <text evidence="1">Amino-acid biosynthesis; L-leucine biosynthesis; L-leucine from 3-methyl-2-oxobutanoate: step 2/4.</text>
</comment>
<comment type="subunit">
    <text evidence="1">Heterodimer of LeuC and LeuD.</text>
</comment>
<comment type="similarity">
    <text evidence="1">Belongs to the LeuD family. LeuD type 1 subfamily.</text>
</comment>
<gene>
    <name evidence="1" type="primary">leuD</name>
    <name type="ordered locus">MAB_3293c</name>
</gene>
<dbReference type="EC" id="4.2.1.33" evidence="1"/>
<dbReference type="EMBL" id="CU458896">
    <property type="protein sequence ID" value="CAM63369.1"/>
    <property type="molecule type" value="Genomic_DNA"/>
</dbReference>
<dbReference type="RefSeq" id="WP_005056901.1">
    <property type="nucleotide sequence ID" value="NZ_MLCG01000001.1"/>
</dbReference>
<dbReference type="SMR" id="B1MDQ0"/>
<dbReference type="GeneID" id="93380225"/>
<dbReference type="KEGG" id="mab:MAB_3293c"/>
<dbReference type="UniPathway" id="UPA00048">
    <property type="reaction ID" value="UER00071"/>
</dbReference>
<dbReference type="Proteomes" id="UP000007137">
    <property type="component" value="Chromosome"/>
</dbReference>
<dbReference type="GO" id="GO:0009316">
    <property type="term" value="C:3-isopropylmalate dehydratase complex"/>
    <property type="evidence" value="ECO:0007669"/>
    <property type="project" value="InterPro"/>
</dbReference>
<dbReference type="GO" id="GO:0003861">
    <property type="term" value="F:3-isopropylmalate dehydratase activity"/>
    <property type="evidence" value="ECO:0007669"/>
    <property type="project" value="UniProtKB-UniRule"/>
</dbReference>
<dbReference type="GO" id="GO:0009098">
    <property type="term" value="P:L-leucine biosynthetic process"/>
    <property type="evidence" value="ECO:0007669"/>
    <property type="project" value="UniProtKB-UniRule"/>
</dbReference>
<dbReference type="CDD" id="cd01577">
    <property type="entry name" value="IPMI_Swivel"/>
    <property type="match status" value="1"/>
</dbReference>
<dbReference type="FunFam" id="3.20.19.10:FF:000003">
    <property type="entry name" value="3-isopropylmalate dehydratase small subunit"/>
    <property type="match status" value="1"/>
</dbReference>
<dbReference type="Gene3D" id="3.20.19.10">
    <property type="entry name" value="Aconitase, domain 4"/>
    <property type="match status" value="1"/>
</dbReference>
<dbReference type="HAMAP" id="MF_01031">
    <property type="entry name" value="LeuD_type1"/>
    <property type="match status" value="1"/>
</dbReference>
<dbReference type="InterPro" id="IPR004431">
    <property type="entry name" value="3-IsopropMal_deHydase_ssu"/>
</dbReference>
<dbReference type="InterPro" id="IPR015928">
    <property type="entry name" value="Aconitase/3IPM_dehydase_swvl"/>
</dbReference>
<dbReference type="InterPro" id="IPR000573">
    <property type="entry name" value="AconitaseA/IPMdHydase_ssu_swvl"/>
</dbReference>
<dbReference type="InterPro" id="IPR033940">
    <property type="entry name" value="IPMI_Swivel"/>
</dbReference>
<dbReference type="InterPro" id="IPR050075">
    <property type="entry name" value="LeuD"/>
</dbReference>
<dbReference type="NCBIfam" id="TIGR00171">
    <property type="entry name" value="leuD"/>
    <property type="match status" value="1"/>
</dbReference>
<dbReference type="NCBIfam" id="NF002458">
    <property type="entry name" value="PRK01641.1"/>
    <property type="match status" value="1"/>
</dbReference>
<dbReference type="PANTHER" id="PTHR43345:SF5">
    <property type="entry name" value="3-ISOPROPYLMALATE DEHYDRATASE SMALL SUBUNIT"/>
    <property type="match status" value="1"/>
</dbReference>
<dbReference type="PANTHER" id="PTHR43345">
    <property type="entry name" value="3-ISOPROPYLMALATE DEHYDRATASE SMALL SUBUNIT 2-RELATED-RELATED"/>
    <property type="match status" value="1"/>
</dbReference>
<dbReference type="Pfam" id="PF00694">
    <property type="entry name" value="Aconitase_C"/>
    <property type="match status" value="1"/>
</dbReference>
<dbReference type="SUPFAM" id="SSF52016">
    <property type="entry name" value="LeuD/IlvD-like"/>
    <property type="match status" value="1"/>
</dbReference>